<proteinExistence type="inferred from homology"/>
<sequence>MCMRRFYICSQGDNLAIKRIGIASRCDRPEVLDMVREILARFSSQVQIFVSTATAEVLGIEGTPVERMRDEGVELVISVGGDGTVLRNIAKMKDPLPILGINMGTLGFLVDVEPEDAIETIEEVLYGFSYLERMRVDVFLNGEMLETATNEIAVMSAKPAKIIQFEVHVNDCLLDEMRADGVVFATPTGSTAYAMSAGGPIINPRVNAIVVVPVAPFKLSSRPWVIPADSEITVKLLEHKKDAVIAIDGQKSYRIRPEDIVKLKKSKFPARFVRISDTCFYERVQRKLS</sequence>
<comment type="function">
    <text evidence="1">Involved in the regulation of the intracellular balance of NAD and NADP, and is a key enzyme in the biosynthesis of NADP. Catalyzes specifically the phosphorylation on 2'-hydroxyl of the adenosine moiety of NAD to yield NADP.</text>
</comment>
<comment type="catalytic activity">
    <reaction evidence="1">
        <text>NAD(+) + ATP = ADP + NADP(+) + H(+)</text>
        <dbReference type="Rhea" id="RHEA:18629"/>
        <dbReference type="ChEBI" id="CHEBI:15378"/>
        <dbReference type="ChEBI" id="CHEBI:30616"/>
        <dbReference type="ChEBI" id="CHEBI:57540"/>
        <dbReference type="ChEBI" id="CHEBI:58349"/>
        <dbReference type="ChEBI" id="CHEBI:456216"/>
        <dbReference type="EC" id="2.7.1.23"/>
    </reaction>
</comment>
<comment type="cofactor">
    <cofactor evidence="1">
        <name>a divalent metal cation</name>
        <dbReference type="ChEBI" id="CHEBI:60240"/>
    </cofactor>
</comment>
<comment type="subcellular location">
    <subcellularLocation>
        <location evidence="1">Cytoplasm</location>
    </subcellularLocation>
</comment>
<comment type="similarity">
    <text evidence="1">Belongs to the NAD kinase family.</text>
</comment>
<organism>
    <name type="scientific">Methanosarcina mazei (strain ATCC BAA-159 / DSM 3647 / Goe1 / Go1 / JCM 11833 / OCM 88)</name>
    <name type="common">Methanosarcina frisia</name>
    <dbReference type="NCBI Taxonomy" id="192952"/>
    <lineage>
        <taxon>Archaea</taxon>
        <taxon>Methanobacteriati</taxon>
        <taxon>Methanobacteriota</taxon>
        <taxon>Stenosarchaea group</taxon>
        <taxon>Methanomicrobia</taxon>
        <taxon>Methanosarcinales</taxon>
        <taxon>Methanosarcinaceae</taxon>
        <taxon>Methanosarcina</taxon>
    </lineage>
</organism>
<name>NADK_METMA</name>
<reference key="1">
    <citation type="journal article" date="2002" name="J. Mol. Microbiol. Biotechnol.">
        <title>The genome of Methanosarcina mazei: evidence for lateral gene transfer between Bacteria and Archaea.</title>
        <authorList>
            <person name="Deppenmeier U."/>
            <person name="Johann A."/>
            <person name="Hartsch T."/>
            <person name="Merkl R."/>
            <person name="Schmitz R.A."/>
            <person name="Martinez-Arias R."/>
            <person name="Henne A."/>
            <person name="Wiezer A."/>
            <person name="Baeumer S."/>
            <person name="Jacobi C."/>
            <person name="Brueggemann H."/>
            <person name="Lienard T."/>
            <person name="Christmann A."/>
            <person name="Boemecke M."/>
            <person name="Steckel S."/>
            <person name="Bhattacharyya A."/>
            <person name="Lykidis A."/>
            <person name="Overbeek R."/>
            <person name="Klenk H.-P."/>
            <person name="Gunsalus R.P."/>
            <person name="Fritz H.-J."/>
            <person name="Gottschalk G."/>
        </authorList>
    </citation>
    <scope>NUCLEOTIDE SEQUENCE [LARGE SCALE GENOMIC DNA]</scope>
    <source>
        <strain>ATCC BAA-159 / DSM 3647 / Goe1 / Go1 / JCM 11833 / OCM 88</strain>
    </source>
</reference>
<evidence type="ECO:0000255" key="1">
    <source>
        <dbReference type="HAMAP-Rule" id="MF_00361"/>
    </source>
</evidence>
<feature type="chain" id="PRO_0000120702" description="NAD kinase">
    <location>
        <begin position="1"/>
        <end position="289"/>
    </location>
</feature>
<feature type="active site" description="Proton acceptor" evidence="1">
    <location>
        <position position="82"/>
    </location>
</feature>
<feature type="binding site" evidence="1">
    <location>
        <begin position="82"/>
        <end position="83"/>
    </location>
    <ligand>
        <name>NAD(+)</name>
        <dbReference type="ChEBI" id="CHEBI:57540"/>
    </ligand>
</feature>
<feature type="binding site" evidence="1">
    <location>
        <position position="87"/>
    </location>
    <ligand>
        <name>NAD(+)</name>
        <dbReference type="ChEBI" id="CHEBI:57540"/>
    </ligand>
</feature>
<feature type="binding site" evidence="1">
    <location>
        <begin position="150"/>
        <end position="151"/>
    </location>
    <ligand>
        <name>NAD(+)</name>
        <dbReference type="ChEBI" id="CHEBI:57540"/>
    </ligand>
</feature>
<feature type="binding site" evidence="1">
    <location>
        <position position="161"/>
    </location>
    <ligand>
        <name>NAD(+)</name>
        <dbReference type="ChEBI" id="CHEBI:57540"/>
    </ligand>
</feature>
<feature type="binding site" evidence="1">
    <location>
        <position position="178"/>
    </location>
    <ligand>
        <name>NAD(+)</name>
        <dbReference type="ChEBI" id="CHEBI:57540"/>
    </ligand>
</feature>
<feature type="binding site" evidence="1">
    <location>
        <position position="180"/>
    </location>
    <ligand>
        <name>NAD(+)</name>
        <dbReference type="ChEBI" id="CHEBI:57540"/>
    </ligand>
</feature>
<feature type="binding site" evidence="1">
    <location>
        <begin position="191"/>
        <end position="196"/>
    </location>
    <ligand>
        <name>NAD(+)</name>
        <dbReference type="ChEBI" id="CHEBI:57540"/>
    </ligand>
</feature>
<feature type="binding site" evidence="1">
    <location>
        <position position="215"/>
    </location>
    <ligand>
        <name>NAD(+)</name>
        <dbReference type="ChEBI" id="CHEBI:57540"/>
    </ligand>
</feature>
<feature type="binding site" evidence="1">
    <location>
        <position position="250"/>
    </location>
    <ligand>
        <name>NAD(+)</name>
        <dbReference type="ChEBI" id="CHEBI:57540"/>
    </ligand>
</feature>
<keyword id="KW-0067">ATP-binding</keyword>
<keyword id="KW-0963">Cytoplasm</keyword>
<keyword id="KW-0418">Kinase</keyword>
<keyword id="KW-0520">NAD</keyword>
<keyword id="KW-0521">NADP</keyword>
<keyword id="KW-0547">Nucleotide-binding</keyword>
<keyword id="KW-0808">Transferase</keyword>
<dbReference type="EC" id="2.7.1.23" evidence="1"/>
<dbReference type="EMBL" id="AE008384">
    <property type="protein sequence ID" value="AAM32480.1"/>
    <property type="molecule type" value="Genomic_DNA"/>
</dbReference>
<dbReference type="SMR" id="Q8PTD1"/>
<dbReference type="KEGG" id="mma:MM_2784"/>
<dbReference type="PATRIC" id="fig|192952.21.peg.3211"/>
<dbReference type="eggNOG" id="arCOG01348">
    <property type="taxonomic scope" value="Archaea"/>
</dbReference>
<dbReference type="HOGENOM" id="CLU_008831_0_2_2"/>
<dbReference type="Proteomes" id="UP000000595">
    <property type="component" value="Chromosome"/>
</dbReference>
<dbReference type="GO" id="GO:0005737">
    <property type="term" value="C:cytoplasm"/>
    <property type="evidence" value="ECO:0007669"/>
    <property type="project" value="UniProtKB-SubCell"/>
</dbReference>
<dbReference type="GO" id="GO:0005524">
    <property type="term" value="F:ATP binding"/>
    <property type="evidence" value="ECO:0007669"/>
    <property type="project" value="UniProtKB-KW"/>
</dbReference>
<dbReference type="GO" id="GO:0046872">
    <property type="term" value="F:metal ion binding"/>
    <property type="evidence" value="ECO:0007669"/>
    <property type="project" value="UniProtKB-UniRule"/>
</dbReference>
<dbReference type="GO" id="GO:0003951">
    <property type="term" value="F:NAD+ kinase activity"/>
    <property type="evidence" value="ECO:0007669"/>
    <property type="project" value="UniProtKB-UniRule"/>
</dbReference>
<dbReference type="GO" id="GO:0019674">
    <property type="term" value="P:NAD metabolic process"/>
    <property type="evidence" value="ECO:0007669"/>
    <property type="project" value="InterPro"/>
</dbReference>
<dbReference type="GO" id="GO:0006741">
    <property type="term" value="P:NADP biosynthetic process"/>
    <property type="evidence" value="ECO:0007669"/>
    <property type="project" value="UniProtKB-UniRule"/>
</dbReference>
<dbReference type="FunFam" id="2.60.200.30:FF:000009">
    <property type="entry name" value="Poly(P)/ATP NAD kinase"/>
    <property type="match status" value="1"/>
</dbReference>
<dbReference type="Gene3D" id="3.40.50.10330">
    <property type="entry name" value="Probable inorganic polyphosphate/atp-NAD kinase, domain 1"/>
    <property type="match status" value="1"/>
</dbReference>
<dbReference type="Gene3D" id="2.60.200.30">
    <property type="entry name" value="Probable inorganic polyphosphate/atp-NAD kinase, domain 2"/>
    <property type="match status" value="1"/>
</dbReference>
<dbReference type="HAMAP" id="MF_00361">
    <property type="entry name" value="NAD_kinase"/>
    <property type="match status" value="1"/>
</dbReference>
<dbReference type="InterPro" id="IPR017438">
    <property type="entry name" value="ATP-NAD_kinase_N"/>
</dbReference>
<dbReference type="InterPro" id="IPR017437">
    <property type="entry name" value="ATP-NAD_kinase_PpnK-typ_C"/>
</dbReference>
<dbReference type="InterPro" id="IPR016064">
    <property type="entry name" value="NAD/diacylglycerol_kinase_sf"/>
</dbReference>
<dbReference type="InterPro" id="IPR002504">
    <property type="entry name" value="NADK"/>
</dbReference>
<dbReference type="PANTHER" id="PTHR20275:SF43">
    <property type="entry name" value="BIFUNCTIONAL NADP PHOSPHATASE_NAD KINASE"/>
    <property type="match status" value="1"/>
</dbReference>
<dbReference type="PANTHER" id="PTHR20275">
    <property type="entry name" value="NAD KINASE"/>
    <property type="match status" value="1"/>
</dbReference>
<dbReference type="Pfam" id="PF01513">
    <property type="entry name" value="NAD_kinase"/>
    <property type="match status" value="1"/>
</dbReference>
<dbReference type="Pfam" id="PF20143">
    <property type="entry name" value="NAD_kinase_C"/>
    <property type="match status" value="1"/>
</dbReference>
<dbReference type="SUPFAM" id="SSF111331">
    <property type="entry name" value="NAD kinase/diacylglycerol kinase-like"/>
    <property type="match status" value="1"/>
</dbReference>
<protein>
    <recommendedName>
        <fullName evidence="1">NAD kinase</fullName>
        <ecNumber evidence="1">2.7.1.23</ecNumber>
    </recommendedName>
    <alternativeName>
        <fullName evidence="1">ATP-dependent NAD kinase</fullName>
    </alternativeName>
</protein>
<gene>
    <name evidence="1" type="primary">nadK</name>
    <name type="ordered locus">MM_2784</name>
</gene>
<accession>Q8PTD1</accession>